<name>UNG_ECO24</name>
<keyword id="KW-0963">Cytoplasm</keyword>
<keyword id="KW-0227">DNA damage</keyword>
<keyword id="KW-0234">DNA repair</keyword>
<keyword id="KW-0378">Hydrolase</keyword>
<keyword id="KW-1185">Reference proteome</keyword>
<feature type="chain" id="PRO_1000058126" description="Uracil-DNA glycosylase">
    <location>
        <begin position="1"/>
        <end position="229"/>
    </location>
</feature>
<feature type="active site" description="Proton acceptor" evidence="1">
    <location>
        <position position="64"/>
    </location>
</feature>
<dbReference type="EC" id="3.2.2.27" evidence="1"/>
<dbReference type="EMBL" id="CP000800">
    <property type="protein sequence ID" value="ABV17636.1"/>
    <property type="molecule type" value="Genomic_DNA"/>
</dbReference>
<dbReference type="RefSeq" id="WP_001262723.1">
    <property type="nucleotide sequence ID" value="NC_009801.1"/>
</dbReference>
<dbReference type="SMR" id="A7ZQ25"/>
<dbReference type="GeneID" id="75206274"/>
<dbReference type="KEGG" id="ecw:EcE24377A_2867"/>
<dbReference type="HOGENOM" id="CLU_032162_3_0_6"/>
<dbReference type="Proteomes" id="UP000001122">
    <property type="component" value="Chromosome"/>
</dbReference>
<dbReference type="GO" id="GO:0005737">
    <property type="term" value="C:cytoplasm"/>
    <property type="evidence" value="ECO:0007669"/>
    <property type="project" value="UniProtKB-SubCell"/>
</dbReference>
<dbReference type="GO" id="GO:0004844">
    <property type="term" value="F:uracil DNA N-glycosylase activity"/>
    <property type="evidence" value="ECO:0007669"/>
    <property type="project" value="UniProtKB-UniRule"/>
</dbReference>
<dbReference type="GO" id="GO:0097510">
    <property type="term" value="P:base-excision repair, AP site formation via deaminated base removal"/>
    <property type="evidence" value="ECO:0007669"/>
    <property type="project" value="TreeGrafter"/>
</dbReference>
<dbReference type="CDD" id="cd10027">
    <property type="entry name" value="UDG-F1-like"/>
    <property type="match status" value="1"/>
</dbReference>
<dbReference type="FunFam" id="3.40.470.10:FF:000001">
    <property type="entry name" value="Uracil-DNA glycosylase"/>
    <property type="match status" value="1"/>
</dbReference>
<dbReference type="Gene3D" id="3.40.470.10">
    <property type="entry name" value="Uracil-DNA glycosylase-like domain"/>
    <property type="match status" value="1"/>
</dbReference>
<dbReference type="HAMAP" id="MF_00148">
    <property type="entry name" value="UDG"/>
    <property type="match status" value="1"/>
</dbReference>
<dbReference type="InterPro" id="IPR002043">
    <property type="entry name" value="UDG_fam1"/>
</dbReference>
<dbReference type="InterPro" id="IPR018085">
    <property type="entry name" value="Ura-DNA_Glyclase_AS"/>
</dbReference>
<dbReference type="InterPro" id="IPR005122">
    <property type="entry name" value="Uracil-DNA_glycosylase-like"/>
</dbReference>
<dbReference type="InterPro" id="IPR036895">
    <property type="entry name" value="Uracil-DNA_glycosylase-like_sf"/>
</dbReference>
<dbReference type="NCBIfam" id="NF003588">
    <property type="entry name" value="PRK05254.1-1"/>
    <property type="match status" value="1"/>
</dbReference>
<dbReference type="NCBIfam" id="NF003589">
    <property type="entry name" value="PRK05254.1-2"/>
    <property type="match status" value="1"/>
</dbReference>
<dbReference type="NCBIfam" id="NF003591">
    <property type="entry name" value="PRK05254.1-4"/>
    <property type="match status" value="1"/>
</dbReference>
<dbReference type="NCBIfam" id="NF003592">
    <property type="entry name" value="PRK05254.1-5"/>
    <property type="match status" value="1"/>
</dbReference>
<dbReference type="NCBIfam" id="TIGR00628">
    <property type="entry name" value="ung"/>
    <property type="match status" value="1"/>
</dbReference>
<dbReference type="PANTHER" id="PTHR11264">
    <property type="entry name" value="URACIL-DNA GLYCOSYLASE"/>
    <property type="match status" value="1"/>
</dbReference>
<dbReference type="PANTHER" id="PTHR11264:SF0">
    <property type="entry name" value="URACIL-DNA GLYCOSYLASE"/>
    <property type="match status" value="1"/>
</dbReference>
<dbReference type="Pfam" id="PF03167">
    <property type="entry name" value="UDG"/>
    <property type="match status" value="1"/>
</dbReference>
<dbReference type="SMART" id="SM00986">
    <property type="entry name" value="UDG"/>
    <property type="match status" value="1"/>
</dbReference>
<dbReference type="SMART" id="SM00987">
    <property type="entry name" value="UreE_C"/>
    <property type="match status" value="1"/>
</dbReference>
<dbReference type="SUPFAM" id="SSF52141">
    <property type="entry name" value="Uracil-DNA glycosylase-like"/>
    <property type="match status" value="1"/>
</dbReference>
<dbReference type="PROSITE" id="PS00130">
    <property type="entry name" value="U_DNA_GLYCOSYLASE"/>
    <property type="match status" value="1"/>
</dbReference>
<proteinExistence type="inferred from homology"/>
<sequence length="229" mass="25681">MANELTWHDVLAEEKQQPYFLNTLQTVASERQSGVTIYPPQKDVFNAFRFTELGDVKVVILGQDPYHGPGQAHGLAFSVRPGIATPPSLLNMYKELENTIPGFTRPNHGYLESWARQGVLLLNTVLTVRAGQAHSHASLGWETFTDKVISLINQHREGVVFLLWGSHAQKKGAIIDKQRHHVLKAPHPSPLSAHRGFFGCNHFVLANQWLEQRGETPIDWMPVLPAESE</sequence>
<accession>A7ZQ25</accession>
<comment type="function">
    <text evidence="1">Excises uracil residues from the DNA which can arise as a result of misincorporation of dUMP residues by DNA polymerase or due to deamination of cytosine.</text>
</comment>
<comment type="catalytic activity">
    <reaction evidence="1">
        <text>Hydrolyzes single-stranded DNA or mismatched double-stranded DNA and polynucleotides, releasing free uracil.</text>
        <dbReference type="EC" id="3.2.2.27"/>
    </reaction>
</comment>
<comment type="subcellular location">
    <subcellularLocation>
        <location evidence="1">Cytoplasm</location>
    </subcellularLocation>
</comment>
<comment type="similarity">
    <text evidence="1">Belongs to the uracil-DNA glycosylase (UDG) superfamily. UNG family.</text>
</comment>
<gene>
    <name evidence="1" type="primary">ung</name>
    <name type="ordered locus">EcE24377A_2867</name>
</gene>
<organism>
    <name type="scientific">Escherichia coli O139:H28 (strain E24377A / ETEC)</name>
    <dbReference type="NCBI Taxonomy" id="331111"/>
    <lineage>
        <taxon>Bacteria</taxon>
        <taxon>Pseudomonadati</taxon>
        <taxon>Pseudomonadota</taxon>
        <taxon>Gammaproteobacteria</taxon>
        <taxon>Enterobacterales</taxon>
        <taxon>Enterobacteriaceae</taxon>
        <taxon>Escherichia</taxon>
    </lineage>
</organism>
<protein>
    <recommendedName>
        <fullName evidence="1">Uracil-DNA glycosylase</fullName>
        <shortName evidence="1">UDG</shortName>
        <ecNumber evidence="1">3.2.2.27</ecNumber>
    </recommendedName>
</protein>
<reference key="1">
    <citation type="journal article" date="2008" name="J. Bacteriol.">
        <title>The pangenome structure of Escherichia coli: comparative genomic analysis of E. coli commensal and pathogenic isolates.</title>
        <authorList>
            <person name="Rasko D.A."/>
            <person name="Rosovitz M.J."/>
            <person name="Myers G.S.A."/>
            <person name="Mongodin E.F."/>
            <person name="Fricke W.F."/>
            <person name="Gajer P."/>
            <person name="Crabtree J."/>
            <person name="Sebaihia M."/>
            <person name="Thomson N.R."/>
            <person name="Chaudhuri R."/>
            <person name="Henderson I.R."/>
            <person name="Sperandio V."/>
            <person name="Ravel J."/>
        </authorList>
    </citation>
    <scope>NUCLEOTIDE SEQUENCE [LARGE SCALE GENOMIC DNA]</scope>
    <source>
        <strain>E24377A / ETEC</strain>
    </source>
</reference>
<evidence type="ECO:0000255" key="1">
    <source>
        <dbReference type="HAMAP-Rule" id="MF_00148"/>
    </source>
</evidence>